<sequence length="232" mass="23967">MAQSKRVKAITAAVVPGKTYAFEDAIKILKTATKAKFVESIDVAVRLGVDAKKSDQQVRGSTVLPAGTGKSVRVAVFAPAGAKADEALAAGAEAVGMDDLAEKMQAGDLNYDVVIATPDAMRVVGKLGTLLGPRGLMPNPKVGTVSANPGEAVKNAKSGQVRYRTDKAGIIHCTIGKASFDDEALKSNLQALLLDLVKAKPATSKGTYLQKVSVSSTMGPGVTVDQSSLSLK</sequence>
<protein>
    <recommendedName>
        <fullName evidence="1">Large ribosomal subunit protein uL1</fullName>
    </recommendedName>
    <alternativeName>
        <fullName evidence="2">50S ribosomal protein L1</fullName>
    </alternativeName>
</protein>
<organism>
    <name type="scientific">Xanthomonas axonopodis pv. citri (strain 306)</name>
    <dbReference type="NCBI Taxonomy" id="190486"/>
    <lineage>
        <taxon>Bacteria</taxon>
        <taxon>Pseudomonadati</taxon>
        <taxon>Pseudomonadota</taxon>
        <taxon>Gammaproteobacteria</taxon>
        <taxon>Lysobacterales</taxon>
        <taxon>Lysobacteraceae</taxon>
        <taxon>Xanthomonas</taxon>
    </lineage>
</organism>
<keyword id="KW-0678">Repressor</keyword>
<keyword id="KW-0687">Ribonucleoprotein</keyword>
<keyword id="KW-0689">Ribosomal protein</keyword>
<keyword id="KW-0694">RNA-binding</keyword>
<keyword id="KW-0699">rRNA-binding</keyword>
<keyword id="KW-0810">Translation regulation</keyword>
<keyword id="KW-0820">tRNA-binding</keyword>
<feature type="chain" id="PRO_0000125778" description="Large ribosomal subunit protein uL1">
    <location>
        <begin position="1"/>
        <end position="232"/>
    </location>
</feature>
<reference key="1">
    <citation type="journal article" date="2002" name="Nature">
        <title>Comparison of the genomes of two Xanthomonas pathogens with differing host specificities.</title>
        <authorList>
            <person name="da Silva A.C.R."/>
            <person name="Ferro J.A."/>
            <person name="Reinach F.C."/>
            <person name="Farah C.S."/>
            <person name="Furlan L.R."/>
            <person name="Quaggio R.B."/>
            <person name="Monteiro-Vitorello C.B."/>
            <person name="Van Sluys M.A."/>
            <person name="Almeida N.F. Jr."/>
            <person name="Alves L.M.C."/>
            <person name="do Amaral A.M."/>
            <person name="Bertolini M.C."/>
            <person name="Camargo L.E.A."/>
            <person name="Camarotte G."/>
            <person name="Cannavan F."/>
            <person name="Cardozo J."/>
            <person name="Chambergo F."/>
            <person name="Ciapina L.P."/>
            <person name="Cicarelli R.M.B."/>
            <person name="Coutinho L.L."/>
            <person name="Cursino-Santos J.R."/>
            <person name="El-Dorry H."/>
            <person name="Faria J.B."/>
            <person name="Ferreira A.J.S."/>
            <person name="Ferreira R.C.C."/>
            <person name="Ferro M.I.T."/>
            <person name="Formighieri E.F."/>
            <person name="Franco M.C."/>
            <person name="Greggio C.C."/>
            <person name="Gruber A."/>
            <person name="Katsuyama A.M."/>
            <person name="Kishi L.T."/>
            <person name="Leite R.P."/>
            <person name="Lemos E.G.M."/>
            <person name="Lemos M.V.F."/>
            <person name="Locali E.C."/>
            <person name="Machado M.A."/>
            <person name="Madeira A.M.B.N."/>
            <person name="Martinez-Rossi N.M."/>
            <person name="Martins E.C."/>
            <person name="Meidanis J."/>
            <person name="Menck C.F.M."/>
            <person name="Miyaki C.Y."/>
            <person name="Moon D.H."/>
            <person name="Moreira L.M."/>
            <person name="Novo M.T.M."/>
            <person name="Okura V.K."/>
            <person name="Oliveira M.C."/>
            <person name="Oliveira V.R."/>
            <person name="Pereira H.A."/>
            <person name="Rossi A."/>
            <person name="Sena J.A.D."/>
            <person name="Silva C."/>
            <person name="de Souza R.F."/>
            <person name="Spinola L.A.F."/>
            <person name="Takita M.A."/>
            <person name="Tamura R.E."/>
            <person name="Teixeira E.C."/>
            <person name="Tezza R.I.D."/>
            <person name="Trindade dos Santos M."/>
            <person name="Truffi D."/>
            <person name="Tsai S.M."/>
            <person name="White F.F."/>
            <person name="Setubal J.C."/>
            <person name="Kitajima J.P."/>
        </authorList>
    </citation>
    <scope>NUCLEOTIDE SEQUENCE [LARGE SCALE GENOMIC DNA]</scope>
    <source>
        <strain>306</strain>
    </source>
</reference>
<proteinExistence type="inferred from homology"/>
<dbReference type="EMBL" id="AE008923">
    <property type="protein sequence ID" value="AAM35845.1"/>
    <property type="molecule type" value="Genomic_DNA"/>
</dbReference>
<dbReference type="RefSeq" id="WP_003486747.1">
    <property type="nucleotide sequence ID" value="NC_003919.1"/>
</dbReference>
<dbReference type="SMR" id="Q8PNT3"/>
<dbReference type="GeneID" id="97509325"/>
<dbReference type="KEGG" id="xac:XAC0962"/>
<dbReference type="eggNOG" id="COG0081">
    <property type="taxonomic scope" value="Bacteria"/>
</dbReference>
<dbReference type="HOGENOM" id="CLU_062853_0_0_6"/>
<dbReference type="Proteomes" id="UP000000576">
    <property type="component" value="Chromosome"/>
</dbReference>
<dbReference type="GO" id="GO:0022625">
    <property type="term" value="C:cytosolic large ribosomal subunit"/>
    <property type="evidence" value="ECO:0007669"/>
    <property type="project" value="TreeGrafter"/>
</dbReference>
<dbReference type="GO" id="GO:0019843">
    <property type="term" value="F:rRNA binding"/>
    <property type="evidence" value="ECO:0007669"/>
    <property type="project" value="UniProtKB-UniRule"/>
</dbReference>
<dbReference type="GO" id="GO:0003735">
    <property type="term" value="F:structural constituent of ribosome"/>
    <property type="evidence" value="ECO:0007669"/>
    <property type="project" value="InterPro"/>
</dbReference>
<dbReference type="GO" id="GO:0000049">
    <property type="term" value="F:tRNA binding"/>
    <property type="evidence" value="ECO:0007669"/>
    <property type="project" value="UniProtKB-KW"/>
</dbReference>
<dbReference type="GO" id="GO:0006417">
    <property type="term" value="P:regulation of translation"/>
    <property type="evidence" value="ECO:0007669"/>
    <property type="project" value="UniProtKB-KW"/>
</dbReference>
<dbReference type="GO" id="GO:0006412">
    <property type="term" value="P:translation"/>
    <property type="evidence" value="ECO:0007669"/>
    <property type="project" value="UniProtKB-UniRule"/>
</dbReference>
<dbReference type="CDD" id="cd00403">
    <property type="entry name" value="Ribosomal_L1"/>
    <property type="match status" value="1"/>
</dbReference>
<dbReference type="FunFam" id="3.40.50.790:FF:000001">
    <property type="entry name" value="50S ribosomal protein L1"/>
    <property type="match status" value="1"/>
</dbReference>
<dbReference type="Gene3D" id="3.30.190.20">
    <property type="match status" value="1"/>
</dbReference>
<dbReference type="Gene3D" id="3.40.50.790">
    <property type="match status" value="1"/>
</dbReference>
<dbReference type="HAMAP" id="MF_01318_B">
    <property type="entry name" value="Ribosomal_uL1_B"/>
    <property type="match status" value="1"/>
</dbReference>
<dbReference type="InterPro" id="IPR005878">
    <property type="entry name" value="Ribosom_uL1_bac-type"/>
</dbReference>
<dbReference type="InterPro" id="IPR002143">
    <property type="entry name" value="Ribosomal_uL1"/>
</dbReference>
<dbReference type="InterPro" id="IPR023674">
    <property type="entry name" value="Ribosomal_uL1-like"/>
</dbReference>
<dbReference type="InterPro" id="IPR028364">
    <property type="entry name" value="Ribosomal_uL1/biogenesis"/>
</dbReference>
<dbReference type="InterPro" id="IPR016095">
    <property type="entry name" value="Ribosomal_uL1_3-a/b-sand"/>
</dbReference>
<dbReference type="InterPro" id="IPR023673">
    <property type="entry name" value="Ribosomal_uL1_CS"/>
</dbReference>
<dbReference type="NCBIfam" id="TIGR01169">
    <property type="entry name" value="rplA_bact"/>
    <property type="match status" value="1"/>
</dbReference>
<dbReference type="PANTHER" id="PTHR36427">
    <property type="entry name" value="54S RIBOSOMAL PROTEIN L1, MITOCHONDRIAL"/>
    <property type="match status" value="1"/>
</dbReference>
<dbReference type="PANTHER" id="PTHR36427:SF3">
    <property type="entry name" value="LARGE RIBOSOMAL SUBUNIT PROTEIN UL1M"/>
    <property type="match status" value="1"/>
</dbReference>
<dbReference type="Pfam" id="PF00687">
    <property type="entry name" value="Ribosomal_L1"/>
    <property type="match status" value="1"/>
</dbReference>
<dbReference type="PIRSF" id="PIRSF002155">
    <property type="entry name" value="Ribosomal_L1"/>
    <property type="match status" value="1"/>
</dbReference>
<dbReference type="SUPFAM" id="SSF56808">
    <property type="entry name" value="Ribosomal protein L1"/>
    <property type="match status" value="1"/>
</dbReference>
<dbReference type="PROSITE" id="PS01199">
    <property type="entry name" value="RIBOSOMAL_L1"/>
    <property type="match status" value="1"/>
</dbReference>
<accession>Q8PNT3</accession>
<name>RL1_XANAC</name>
<gene>
    <name evidence="1" type="primary">rplA</name>
    <name type="ordered locus">XAC0962</name>
</gene>
<evidence type="ECO:0000255" key="1">
    <source>
        <dbReference type="HAMAP-Rule" id="MF_01318"/>
    </source>
</evidence>
<evidence type="ECO:0000305" key="2"/>
<comment type="function">
    <text evidence="1">Binds directly to 23S rRNA. The L1 stalk is quite mobile in the ribosome, and is involved in E site tRNA release.</text>
</comment>
<comment type="function">
    <text evidence="1">Protein L1 is also a translational repressor protein, it controls the translation of the L11 operon by binding to its mRNA.</text>
</comment>
<comment type="subunit">
    <text evidence="1">Part of the 50S ribosomal subunit.</text>
</comment>
<comment type="similarity">
    <text evidence="1">Belongs to the universal ribosomal protein uL1 family.</text>
</comment>